<reference key="1">
    <citation type="journal article" date="2007" name="Genome Biol.">
        <title>Characterization and modeling of the Haemophilus influenzae core and supragenomes based on the complete genomic sequences of Rd and 12 clinical nontypeable strains.</title>
        <authorList>
            <person name="Hogg J.S."/>
            <person name="Hu F.Z."/>
            <person name="Janto B."/>
            <person name="Boissy R."/>
            <person name="Hayes J."/>
            <person name="Keefe R."/>
            <person name="Post J.C."/>
            <person name="Ehrlich G.D."/>
        </authorList>
    </citation>
    <scope>NUCLEOTIDE SEQUENCE [LARGE SCALE GENOMIC DNA]</scope>
    <source>
        <strain>PittEE</strain>
    </source>
</reference>
<proteinExistence type="inferred from homology"/>
<keyword id="KW-0067">ATP-binding</keyword>
<keyword id="KW-0963">Cytoplasm</keyword>
<keyword id="KW-0275">Fatty acid biosynthesis</keyword>
<keyword id="KW-0276">Fatty acid metabolism</keyword>
<keyword id="KW-0444">Lipid biosynthesis</keyword>
<keyword id="KW-0443">Lipid metabolism</keyword>
<keyword id="KW-0479">Metal-binding</keyword>
<keyword id="KW-0547">Nucleotide-binding</keyword>
<keyword id="KW-0808">Transferase</keyword>
<keyword id="KW-0862">Zinc</keyword>
<keyword id="KW-0863">Zinc-finger</keyword>
<name>ACCD_HAEIE</name>
<organism>
    <name type="scientific">Haemophilus influenzae (strain PittEE)</name>
    <dbReference type="NCBI Taxonomy" id="374930"/>
    <lineage>
        <taxon>Bacteria</taxon>
        <taxon>Pseudomonadati</taxon>
        <taxon>Pseudomonadota</taxon>
        <taxon>Gammaproteobacteria</taxon>
        <taxon>Pasteurellales</taxon>
        <taxon>Pasteurellaceae</taxon>
        <taxon>Haemophilus</taxon>
    </lineage>
</organism>
<sequence>MSWINRIFSKSPSSSTRKANVPEGVWTKCTSCEQVLYSEELKRNLYVCPKCGHHMRIDARERLLKLLDEGSSQEIAADLEPKDILKFKDLKKYKDRINAAQKETGEKDALITMTGTLYDMPIVVAASNFAFMGGSMGSVVGAKFVKAAEKAMEMNCPFVCFSASGGARMQEALFSLMQMAKTSAVLAQMREKGVPFISVLADPTLGGVSASFAMLGDLNIAEPKALIGFAGPRVIEQTVREKLPEGFQRSEFLLEKGAIDMIVKRSEMRQTLASVLSKLTNQPSPFVEPELISEDE</sequence>
<comment type="function">
    <text evidence="1">Component of the acetyl coenzyme A carboxylase (ACC) complex. Biotin carboxylase (BC) catalyzes the carboxylation of biotin on its carrier protein (BCCP) and then the CO(2) group is transferred by the transcarboxylase to acetyl-CoA to form malonyl-CoA.</text>
</comment>
<comment type="catalytic activity">
    <reaction evidence="1">
        <text>N(6)-carboxybiotinyl-L-lysyl-[protein] + acetyl-CoA = N(6)-biotinyl-L-lysyl-[protein] + malonyl-CoA</text>
        <dbReference type="Rhea" id="RHEA:54728"/>
        <dbReference type="Rhea" id="RHEA-COMP:10505"/>
        <dbReference type="Rhea" id="RHEA-COMP:10506"/>
        <dbReference type="ChEBI" id="CHEBI:57288"/>
        <dbReference type="ChEBI" id="CHEBI:57384"/>
        <dbReference type="ChEBI" id="CHEBI:83144"/>
        <dbReference type="ChEBI" id="CHEBI:83145"/>
        <dbReference type="EC" id="2.1.3.15"/>
    </reaction>
</comment>
<comment type="cofactor">
    <cofactor evidence="1">
        <name>Zn(2+)</name>
        <dbReference type="ChEBI" id="CHEBI:29105"/>
    </cofactor>
    <text evidence="1">Binds 1 zinc ion per subunit.</text>
</comment>
<comment type="pathway">
    <text evidence="1">Lipid metabolism; malonyl-CoA biosynthesis; malonyl-CoA from acetyl-CoA: step 1/1.</text>
</comment>
<comment type="subunit">
    <text evidence="1">Acetyl-CoA carboxylase is a heterohexamer composed of biotin carboxyl carrier protein (AccB), biotin carboxylase (AccC) and two subunits each of ACCase subunit alpha (AccA) and ACCase subunit beta (AccD).</text>
</comment>
<comment type="subcellular location">
    <subcellularLocation>
        <location evidence="1">Cytoplasm</location>
    </subcellularLocation>
</comment>
<comment type="similarity">
    <text evidence="1">Belongs to the AccD/PCCB family.</text>
</comment>
<protein>
    <recommendedName>
        <fullName evidence="1">Acetyl-coenzyme A carboxylase carboxyl transferase subunit beta</fullName>
        <shortName evidence="1">ACCase subunit beta</shortName>
        <shortName evidence="1">Acetyl-CoA carboxylase carboxyltransferase subunit beta</shortName>
        <ecNumber evidence="1">2.1.3.15</ecNumber>
    </recommendedName>
</protein>
<accession>A5UBS0</accession>
<feature type="chain" id="PRO_0000358998" description="Acetyl-coenzyme A carboxylase carboxyl transferase subunit beta">
    <location>
        <begin position="1"/>
        <end position="296"/>
    </location>
</feature>
<feature type="domain" description="CoA carboxyltransferase N-terminal" evidence="2">
    <location>
        <begin position="25"/>
        <end position="294"/>
    </location>
</feature>
<feature type="zinc finger region" description="C4-type" evidence="1">
    <location>
        <begin position="29"/>
        <end position="51"/>
    </location>
</feature>
<feature type="binding site" evidence="1">
    <location>
        <position position="29"/>
    </location>
    <ligand>
        <name>Zn(2+)</name>
        <dbReference type="ChEBI" id="CHEBI:29105"/>
    </ligand>
</feature>
<feature type="binding site" evidence="1">
    <location>
        <position position="32"/>
    </location>
    <ligand>
        <name>Zn(2+)</name>
        <dbReference type="ChEBI" id="CHEBI:29105"/>
    </ligand>
</feature>
<feature type="binding site" evidence="1">
    <location>
        <position position="48"/>
    </location>
    <ligand>
        <name>Zn(2+)</name>
        <dbReference type="ChEBI" id="CHEBI:29105"/>
    </ligand>
</feature>
<feature type="binding site" evidence="1">
    <location>
        <position position="51"/>
    </location>
    <ligand>
        <name>Zn(2+)</name>
        <dbReference type="ChEBI" id="CHEBI:29105"/>
    </ligand>
</feature>
<evidence type="ECO:0000255" key="1">
    <source>
        <dbReference type="HAMAP-Rule" id="MF_01395"/>
    </source>
</evidence>
<evidence type="ECO:0000255" key="2">
    <source>
        <dbReference type="PROSITE-ProRule" id="PRU01136"/>
    </source>
</evidence>
<dbReference type="EC" id="2.1.3.15" evidence="1"/>
<dbReference type="EMBL" id="CP000671">
    <property type="protein sequence ID" value="ABQ98221.1"/>
    <property type="molecule type" value="Genomic_DNA"/>
</dbReference>
<dbReference type="SMR" id="A5UBS0"/>
<dbReference type="KEGG" id="hip:CGSHiEE_04050"/>
<dbReference type="HOGENOM" id="CLU_015486_1_0_6"/>
<dbReference type="UniPathway" id="UPA00655">
    <property type="reaction ID" value="UER00711"/>
</dbReference>
<dbReference type="GO" id="GO:0009329">
    <property type="term" value="C:acetate CoA-transferase complex"/>
    <property type="evidence" value="ECO:0007669"/>
    <property type="project" value="TreeGrafter"/>
</dbReference>
<dbReference type="GO" id="GO:0003989">
    <property type="term" value="F:acetyl-CoA carboxylase activity"/>
    <property type="evidence" value="ECO:0007669"/>
    <property type="project" value="InterPro"/>
</dbReference>
<dbReference type="GO" id="GO:0005524">
    <property type="term" value="F:ATP binding"/>
    <property type="evidence" value="ECO:0007669"/>
    <property type="project" value="UniProtKB-KW"/>
</dbReference>
<dbReference type="GO" id="GO:0016743">
    <property type="term" value="F:carboxyl- or carbamoyltransferase activity"/>
    <property type="evidence" value="ECO:0007669"/>
    <property type="project" value="UniProtKB-UniRule"/>
</dbReference>
<dbReference type="GO" id="GO:0008270">
    <property type="term" value="F:zinc ion binding"/>
    <property type="evidence" value="ECO:0007669"/>
    <property type="project" value="UniProtKB-UniRule"/>
</dbReference>
<dbReference type="GO" id="GO:0006633">
    <property type="term" value="P:fatty acid biosynthetic process"/>
    <property type="evidence" value="ECO:0007669"/>
    <property type="project" value="UniProtKB-KW"/>
</dbReference>
<dbReference type="GO" id="GO:2001295">
    <property type="term" value="P:malonyl-CoA biosynthetic process"/>
    <property type="evidence" value="ECO:0007669"/>
    <property type="project" value="UniProtKB-UniRule"/>
</dbReference>
<dbReference type="Gene3D" id="3.90.226.10">
    <property type="entry name" value="2-enoyl-CoA Hydratase, Chain A, domain 1"/>
    <property type="match status" value="1"/>
</dbReference>
<dbReference type="HAMAP" id="MF_01395">
    <property type="entry name" value="AcetylCoA_CT_beta"/>
    <property type="match status" value="1"/>
</dbReference>
<dbReference type="InterPro" id="IPR034733">
    <property type="entry name" value="AcCoA_carboxyl_beta"/>
</dbReference>
<dbReference type="InterPro" id="IPR000438">
    <property type="entry name" value="Acetyl_CoA_COase_Trfase_b_su"/>
</dbReference>
<dbReference type="InterPro" id="IPR029045">
    <property type="entry name" value="ClpP/crotonase-like_dom_sf"/>
</dbReference>
<dbReference type="InterPro" id="IPR011762">
    <property type="entry name" value="COA_CT_N"/>
</dbReference>
<dbReference type="InterPro" id="IPR041010">
    <property type="entry name" value="Znf-ACC"/>
</dbReference>
<dbReference type="NCBIfam" id="TIGR00515">
    <property type="entry name" value="accD"/>
    <property type="match status" value="1"/>
</dbReference>
<dbReference type="PANTHER" id="PTHR42995">
    <property type="entry name" value="ACETYL-COENZYME A CARBOXYLASE CARBOXYL TRANSFERASE SUBUNIT BETA, CHLOROPLASTIC"/>
    <property type="match status" value="1"/>
</dbReference>
<dbReference type="PANTHER" id="PTHR42995:SF5">
    <property type="entry name" value="ACETYL-COENZYME A CARBOXYLASE CARBOXYL TRANSFERASE SUBUNIT BETA, CHLOROPLASTIC"/>
    <property type="match status" value="1"/>
</dbReference>
<dbReference type="Pfam" id="PF01039">
    <property type="entry name" value="Carboxyl_trans"/>
    <property type="match status" value="1"/>
</dbReference>
<dbReference type="Pfam" id="PF17848">
    <property type="entry name" value="Zn_ribbon_ACC"/>
    <property type="match status" value="1"/>
</dbReference>
<dbReference type="PRINTS" id="PR01070">
    <property type="entry name" value="ACCCTRFRASEB"/>
</dbReference>
<dbReference type="SUPFAM" id="SSF52096">
    <property type="entry name" value="ClpP/crotonase"/>
    <property type="match status" value="1"/>
</dbReference>
<dbReference type="PROSITE" id="PS50980">
    <property type="entry name" value="COA_CT_NTER"/>
    <property type="match status" value="1"/>
</dbReference>
<gene>
    <name evidence="1" type="primary">accD</name>
    <name type="ordered locus">CGSHiEE_04050</name>
</gene>